<dbReference type="EMBL" id="CP000614">
    <property type="protein sequence ID" value="ABO54474.1"/>
    <property type="molecule type" value="Genomic_DNA"/>
</dbReference>
<dbReference type="SMR" id="A4JDX1"/>
<dbReference type="KEGG" id="bvi:Bcep1808_1466"/>
<dbReference type="eggNOG" id="COG0532">
    <property type="taxonomic scope" value="Bacteria"/>
</dbReference>
<dbReference type="HOGENOM" id="CLU_006301_6_0_4"/>
<dbReference type="Proteomes" id="UP000002287">
    <property type="component" value="Chromosome 1"/>
</dbReference>
<dbReference type="GO" id="GO:0005829">
    <property type="term" value="C:cytosol"/>
    <property type="evidence" value="ECO:0007669"/>
    <property type="project" value="TreeGrafter"/>
</dbReference>
<dbReference type="GO" id="GO:0005525">
    <property type="term" value="F:GTP binding"/>
    <property type="evidence" value="ECO:0007669"/>
    <property type="project" value="UniProtKB-KW"/>
</dbReference>
<dbReference type="GO" id="GO:0003924">
    <property type="term" value="F:GTPase activity"/>
    <property type="evidence" value="ECO:0007669"/>
    <property type="project" value="UniProtKB-UniRule"/>
</dbReference>
<dbReference type="GO" id="GO:0097216">
    <property type="term" value="F:guanosine tetraphosphate binding"/>
    <property type="evidence" value="ECO:0007669"/>
    <property type="project" value="UniProtKB-ARBA"/>
</dbReference>
<dbReference type="GO" id="GO:0003743">
    <property type="term" value="F:translation initiation factor activity"/>
    <property type="evidence" value="ECO:0007669"/>
    <property type="project" value="UniProtKB-UniRule"/>
</dbReference>
<dbReference type="CDD" id="cd01887">
    <property type="entry name" value="IF2_eIF5B"/>
    <property type="match status" value="1"/>
</dbReference>
<dbReference type="CDD" id="cd03702">
    <property type="entry name" value="IF2_mtIF2_II"/>
    <property type="match status" value="1"/>
</dbReference>
<dbReference type="CDD" id="cd03692">
    <property type="entry name" value="mtIF2_IVc"/>
    <property type="match status" value="1"/>
</dbReference>
<dbReference type="FunFam" id="2.40.30.10:FF:000007">
    <property type="entry name" value="Translation initiation factor IF-2"/>
    <property type="match status" value="1"/>
</dbReference>
<dbReference type="FunFam" id="2.40.30.10:FF:000008">
    <property type="entry name" value="Translation initiation factor IF-2"/>
    <property type="match status" value="1"/>
</dbReference>
<dbReference type="FunFam" id="3.40.50.10050:FF:000001">
    <property type="entry name" value="Translation initiation factor IF-2"/>
    <property type="match status" value="1"/>
</dbReference>
<dbReference type="FunFam" id="3.40.50.300:FF:000019">
    <property type="entry name" value="Translation initiation factor IF-2"/>
    <property type="match status" value="1"/>
</dbReference>
<dbReference type="Gene3D" id="3.40.50.300">
    <property type="entry name" value="P-loop containing nucleotide triphosphate hydrolases"/>
    <property type="match status" value="1"/>
</dbReference>
<dbReference type="Gene3D" id="3.30.56.50">
    <property type="entry name" value="Putative DNA-binding domain, N-terminal subdomain of bacterial translation initiation factor IF2"/>
    <property type="match status" value="1"/>
</dbReference>
<dbReference type="Gene3D" id="2.40.30.10">
    <property type="entry name" value="Translation factors"/>
    <property type="match status" value="2"/>
</dbReference>
<dbReference type="Gene3D" id="3.40.50.10050">
    <property type="entry name" value="Translation initiation factor IF- 2, domain 3"/>
    <property type="match status" value="1"/>
</dbReference>
<dbReference type="HAMAP" id="MF_00100_B">
    <property type="entry name" value="IF_2_B"/>
    <property type="match status" value="1"/>
</dbReference>
<dbReference type="InterPro" id="IPR009061">
    <property type="entry name" value="DNA-bd_dom_put_sf"/>
</dbReference>
<dbReference type="InterPro" id="IPR053905">
    <property type="entry name" value="EF-G-like_DII"/>
</dbReference>
<dbReference type="InterPro" id="IPR004161">
    <property type="entry name" value="EFTu-like_2"/>
</dbReference>
<dbReference type="InterPro" id="IPR013575">
    <property type="entry name" value="IF2_assoc_dom_bac"/>
</dbReference>
<dbReference type="InterPro" id="IPR044145">
    <property type="entry name" value="IF2_II"/>
</dbReference>
<dbReference type="InterPro" id="IPR006847">
    <property type="entry name" value="IF2_N"/>
</dbReference>
<dbReference type="InterPro" id="IPR027417">
    <property type="entry name" value="P-loop_NTPase"/>
</dbReference>
<dbReference type="InterPro" id="IPR005225">
    <property type="entry name" value="Small_GTP-bd"/>
</dbReference>
<dbReference type="InterPro" id="IPR000795">
    <property type="entry name" value="T_Tr_GTP-bd_dom"/>
</dbReference>
<dbReference type="InterPro" id="IPR000178">
    <property type="entry name" value="TF_IF2_bacterial-like"/>
</dbReference>
<dbReference type="InterPro" id="IPR015760">
    <property type="entry name" value="TIF_IF2"/>
</dbReference>
<dbReference type="InterPro" id="IPR023115">
    <property type="entry name" value="TIF_IF2_dom3"/>
</dbReference>
<dbReference type="InterPro" id="IPR036925">
    <property type="entry name" value="TIF_IF2_dom3_sf"/>
</dbReference>
<dbReference type="InterPro" id="IPR009000">
    <property type="entry name" value="Transl_B-barrel_sf"/>
</dbReference>
<dbReference type="NCBIfam" id="TIGR00487">
    <property type="entry name" value="IF-2"/>
    <property type="match status" value="1"/>
</dbReference>
<dbReference type="NCBIfam" id="TIGR00231">
    <property type="entry name" value="small_GTP"/>
    <property type="match status" value="1"/>
</dbReference>
<dbReference type="PANTHER" id="PTHR43381:SF5">
    <property type="entry name" value="TR-TYPE G DOMAIN-CONTAINING PROTEIN"/>
    <property type="match status" value="1"/>
</dbReference>
<dbReference type="PANTHER" id="PTHR43381">
    <property type="entry name" value="TRANSLATION INITIATION FACTOR IF-2-RELATED"/>
    <property type="match status" value="1"/>
</dbReference>
<dbReference type="Pfam" id="PF22042">
    <property type="entry name" value="EF-G_D2"/>
    <property type="match status" value="1"/>
</dbReference>
<dbReference type="Pfam" id="PF00009">
    <property type="entry name" value="GTP_EFTU"/>
    <property type="match status" value="1"/>
</dbReference>
<dbReference type="Pfam" id="PF03144">
    <property type="entry name" value="GTP_EFTU_D2"/>
    <property type="match status" value="1"/>
</dbReference>
<dbReference type="Pfam" id="PF11987">
    <property type="entry name" value="IF-2"/>
    <property type="match status" value="1"/>
</dbReference>
<dbReference type="Pfam" id="PF08364">
    <property type="entry name" value="IF2_assoc"/>
    <property type="match status" value="1"/>
</dbReference>
<dbReference type="Pfam" id="PF04760">
    <property type="entry name" value="IF2_N"/>
    <property type="match status" value="2"/>
</dbReference>
<dbReference type="SUPFAM" id="SSF52156">
    <property type="entry name" value="Initiation factor IF2/eIF5b, domain 3"/>
    <property type="match status" value="1"/>
</dbReference>
<dbReference type="SUPFAM" id="SSF52540">
    <property type="entry name" value="P-loop containing nucleoside triphosphate hydrolases"/>
    <property type="match status" value="1"/>
</dbReference>
<dbReference type="SUPFAM" id="SSF46955">
    <property type="entry name" value="Putative DNA-binding domain"/>
    <property type="match status" value="1"/>
</dbReference>
<dbReference type="SUPFAM" id="SSF50447">
    <property type="entry name" value="Translation proteins"/>
    <property type="match status" value="2"/>
</dbReference>
<dbReference type="PROSITE" id="PS51722">
    <property type="entry name" value="G_TR_2"/>
    <property type="match status" value="1"/>
</dbReference>
<dbReference type="PROSITE" id="PS01176">
    <property type="entry name" value="IF2"/>
    <property type="match status" value="1"/>
</dbReference>
<proteinExistence type="inferred from homology"/>
<sequence length="974" mass="104459">MASNNVAQFAAELKMPAGVLLEQLQAAGVQKASEDDALSETDKARLLDHLRKSHGATDGDKRKITLTRKHTSEIKQSDATGKARTIQVEVRKKRTFVKRDDVAEGAEQGQAQVAEADDDAELKRREEEARREAELLEQQAQELLERQERLEREEAERRAREEAAEAERRRAEEEAAAKRAAAEAAAAQQAAAQQAAEAKQEAPGAQSAQEEARAAAERAAQREAAKKAEDAAREAADKARAEQEEIRKRREAAEAEARAIREMMNTPRKAVVKAVEPPKPVEAPKPAEAKGTLHKPAKPAGAGVQARPAVKKPAGATPATTQAPAAGAGDRNKKPGGGKGGWQDDAAKRRGIKTRGDSSGGVDRGWRGGPKGRGRHQDSASTFQAPTEPIVREVHVPETISVADLAHKMSIKASEVIKVMMKMGQMVTINQVLDQETAMIVVEELGHRAVAAKLDDPEALLVEGETSSDAEQLPRPPVVTVMGHVDHGKTSLLDHIRRAKVAAGEAGGITQHIGAYHVETPRGVITFLDTPGHEAFTAMRARGAKATDIVVLVVAADDGVMPQTKEAIAHAKAGGVPIVVAINKIDKPEANPDRVKQELVAEGVVPEEYGGDSPFVPVSAKTGAGIDDLLENVLLQAEVLELKAPVEAPAKGIVIEAKLDKGKGPVATILVQSGTLNRGDIVLAGSAYGRVRAMLDENGKPTKEAGPSIPVEIQGLSEVPGAGEEVIVLPDERKAREIALFRQGKFRDVKLAKQQAAKLESMLEQMGEGEVQNLPLIIKADVQGSQEALVQSLLKLSTDEVRVQIVHSAVGGISENDVNLATASKAVIIGFNTRADAQARKLAEANGIDIRYYNIIYDAVDEVKAAMSGMLAPEKREVITGMVEVRQVFKVPKIGTVAGCMVTDGIVKRSSSVRVLRNNVVIFTGELESLKRFKDDVKEVKQGFECGMSVKNFNDIVEGDQFEVFEVTEVARTL</sequence>
<name>IF2_BURVG</name>
<organism>
    <name type="scientific">Burkholderia vietnamiensis (strain G4 / LMG 22486)</name>
    <name type="common">Burkholderia cepacia (strain R1808)</name>
    <dbReference type="NCBI Taxonomy" id="269482"/>
    <lineage>
        <taxon>Bacteria</taxon>
        <taxon>Pseudomonadati</taxon>
        <taxon>Pseudomonadota</taxon>
        <taxon>Betaproteobacteria</taxon>
        <taxon>Burkholderiales</taxon>
        <taxon>Burkholderiaceae</taxon>
        <taxon>Burkholderia</taxon>
        <taxon>Burkholderia cepacia complex</taxon>
    </lineage>
</organism>
<protein>
    <recommendedName>
        <fullName evidence="2">Translation initiation factor IF-2</fullName>
    </recommendedName>
</protein>
<evidence type="ECO:0000250" key="1"/>
<evidence type="ECO:0000255" key="2">
    <source>
        <dbReference type="HAMAP-Rule" id="MF_00100"/>
    </source>
</evidence>
<evidence type="ECO:0000256" key="3">
    <source>
        <dbReference type="SAM" id="MobiDB-lite"/>
    </source>
</evidence>
<comment type="function">
    <text evidence="2">One of the essential components for the initiation of protein synthesis. Protects formylmethionyl-tRNA from spontaneous hydrolysis and promotes its binding to the 30S ribosomal subunits. Also involved in the hydrolysis of GTP during the formation of the 70S ribosomal complex.</text>
</comment>
<comment type="subcellular location">
    <subcellularLocation>
        <location evidence="2">Cytoplasm</location>
    </subcellularLocation>
</comment>
<comment type="similarity">
    <text evidence="2">Belongs to the TRAFAC class translation factor GTPase superfamily. Classic translation factor GTPase family. IF-2 subfamily.</text>
</comment>
<accession>A4JDX1</accession>
<reference key="1">
    <citation type="submission" date="2007-03" db="EMBL/GenBank/DDBJ databases">
        <title>Complete sequence of chromosome 1 of Burkholderia vietnamiensis G4.</title>
        <authorList>
            <consortium name="US DOE Joint Genome Institute"/>
            <person name="Copeland A."/>
            <person name="Lucas S."/>
            <person name="Lapidus A."/>
            <person name="Barry K."/>
            <person name="Detter J.C."/>
            <person name="Glavina del Rio T."/>
            <person name="Hammon N."/>
            <person name="Israni S."/>
            <person name="Dalin E."/>
            <person name="Tice H."/>
            <person name="Pitluck S."/>
            <person name="Chain P."/>
            <person name="Malfatti S."/>
            <person name="Shin M."/>
            <person name="Vergez L."/>
            <person name="Schmutz J."/>
            <person name="Larimer F."/>
            <person name="Land M."/>
            <person name="Hauser L."/>
            <person name="Kyrpides N."/>
            <person name="Tiedje J."/>
            <person name="Richardson P."/>
        </authorList>
    </citation>
    <scope>NUCLEOTIDE SEQUENCE [LARGE SCALE GENOMIC DNA]</scope>
    <source>
        <strain>G4 / LMG 22486</strain>
    </source>
</reference>
<gene>
    <name evidence="2" type="primary">infB</name>
    <name type="ordered locus">Bcep1808_1466</name>
</gene>
<keyword id="KW-0963">Cytoplasm</keyword>
<keyword id="KW-0342">GTP-binding</keyword>
<keyword id="KW-0396">Initiation factor</keyword>
<keyword id="KW-0547">Nucleotide-binding</keyword>
<keyword id="KW-0648">Protein biosynthesis</keyword>
<feature type="chain" id="PRO_1000008217" description="Translation initiation factor IF-2">
    <location>
        <begin position="1"/>
        <end position="974"/>
    </location>
</feature>
<feature type="domain" description="tr-type G">
    <location>
        <begin position="474"/>
        <end position="643"/>
    </location>
</feature>
<feature type="region of interest" description="Disordered" evidence="3">
    <location>
        <begin position="67"/>
        <end position="86"/>
    </location>
</feature>
<feature type="region of interest" description="Disordered" evidence="3">
    <location>
        <begin position="101"/>
        <end position="133"/>
    </location>
</feature>
<feature type="region of interest" description="Disordered" evidence="3">
    <location>
        <begin position="146"/>
        <end position="385"/>
    </location>
</feature>
<feature type="region of interest" description="G1" evidence="1">
    <location>
        <begin position="483"/>
        <end position="490"/>
    </location>
</feature>
<feature type="region of interest" description="G2" evidence="1">
    <location>
        <begin position="508"/>
        <end position="512"/>
    </location>
</feature>
<feature type="region of interest" description="G3" evidence="1">
    <location>
        <begin position="529"/>
        <end position="532"/>
    </location>
</feature>
<feature type="region of interest" description="G4" evidence="1">
    <location>
        <begin position="583"/>
        <end position="586"/>
    </location>
</feature>
<feature type="region of interest" description="G5" evidence="1">
    <location>
        <begin position="619"/>
        <end position="621"/>
    </location>
</feature>
<feature type="compositionally biased region" description="Low complexity" evidence="3">
    <location>
        <begin position="105"/>
        <end position="114"/>
    </location>
</feature>
<feature type="compositionally biased region" description="Basic and acidic residues" evidence="3">
    <location>
        <begin position="121"/>
        <end position="133"/>
    </location>
</feature>
<feature type="compositionally biased region" description="Basic and acidic residues" evidence="3">
    <location>
        <begin position="146"/>
        <end position="181"/>
    </location>
</feature>
<feature type="compositionally biased region" description="Low complexity" evidence="3">
    <location>
        <begin position="182"/>
        <end position="197"/>
    </location>
</feature>
<feature type="compositionally biased region" description="Basic and acidic residues" evidence="3">
    <location>
        <begin position="210"/>
        <end position="261"/>
    </location>
</feature>
<feature type="compositionally biased region" description="Low complexity" evidence="3">
    <location>
        <begin position="313"/>
        <end position="329"/>
    </location>
</feature>
<feature type="compositionally biased region" description="Gly residues" evidence="3">
    <location>
        <begin position="358"/>
        <end position="371"/>
    </location>
</feature>
<feature type="binding site" evidence="2">
    <location>
        <begin position="483"/>
        <end position="490"/>
    </location>
    <ligand>
        <name>GTP</name>
        <dbReference type="ChEBI" id="CHEBI:37565"/>
    </ligand>
</feature>
<feature type="binding site" evidence="2">
    <location>
        <begin position="529"/>
        <end position="533"/>
    </location>
    <ligand>
        <name>GTP</name>
        <dbReference type="ChEBI" id="CHEBI:37565"/>
    </ligand>
</feature>
<feature type="binding site" evidence="2">
    <location>
        <begin position="583"/>
        <end position="586"/>
    </location>
    <ligand>
        <name>GTP</name>
        <dbReference type="ChEBI" id="CHEBI:37565"/>
    </ligand>
</feature>